<sequence length="457" mass="49440">MQKYTSEARQLLALAIPVILAQVAQTAMGFVDTVMAGGYSATDMAAVAIGTSIWLPAILFGHGLLLALTPVIAQLNGSGRRERIAHQVRQGFWLAGFVSVLVMIVLWNAGYIIRSMHNIDPALADKAVGYLRALLWGAPGYLFFQVARNQCEGLAKTKPGMVMGFLGLLVNIPVNYIFIYGHFGMPELGGIGCGVATAAVYWVMFIAMLSYIKHARSMRDIRNEKGFGKPDSVVMKRLIQLGLPIALALFFEVTLFAVVALLVSPLGIVDVAGHQIALNFSSLMFVLPMSLAAAVTIRVGYRLGQGSTLDAQTAARTGLGVGICMAVVTAIFTVTLRKHIALLYNDNPEVVALAAQLMLLAAVYQISDSIQIIGSGILRGYKDTRSIFFITFTAYWVLGLPSGYILALTDLVVDRMGPAGFWMGFIIGLTSAAVLMMLRMRYLQRQPSAIILQRAAR</sequence>
<feature type="chain" id="PRO_0000164188" description="Multidrug resistance protein MdtK">
    <location>
        <begin position="1"/>
        <end position="457"/>
    </location>
</feature>
<feature type="topological domain" description="Cytoplasmic" evidence="2">
    <location>
        <begin position="1"/>
        <end position="10"/>
    </location>
</feature>
<feature type="transmembrane region" description="Helical" evidence="2">
    <location>
        <begin position="11"/>
        <end position="31"/>
    </location>
</feature>
<feature type="topological domain" description="Extracellular" evidence="2">
    <location>
        <begin position="32"/>
        <end position="52"/>
    </location>
</feature>
<feature type="transmembrane region" description="Helical" evidence="2">
    <location>
        <begin position="53"/>
        <end position="73"/>
    </location>
</feature>
<feature type="topological domain" description="Cytoplasmic" evidence="2">
    <location>
        <begin position="74"/>
        <end position="92"/>
    </location>
</feature>
<feature type="transmembrane region" description="Helical" evidence="2">
    <location>
        <begin position="93"/>
        <end position="113"/>
    </location>
</feature>
<feature type="topological domain" description="Extracellular" evidence="2">
    <location>
        <begin position="114"/>
        <end position="126"/>
    </location>
</feature>
<feature type="transmembrane region" description="Helical" evidence="2">
    <location>
        <begin position="127"/>
        <end position="147"/>
    </location>
</feature>
<feature type="topological domain" description="Cytoplasmic" evidence="2">
    <location>
        <begin position="148"/>
        <end position="159"/>
    </location>
</feature>
<feature type="transmembrane region" description="Helical" evidence="2">
    <location>
        <begin position="160"/>
        <end position="180"/>
    </location>
</feature>
<feature type="topological domain" description="Extracellular" evidence="2">
    <location>
        <begin position="181"/>
        <end position="187"/>
    </location>
</feature>
<feature type="transmembrane region" description="Helical" evidence="2">
    <location>
        <begin position="188"/>
        <end position="208"/>
    </location>
</feature>
<feature type="topological domain" description="Cytoplasmic" evidence="2">
    <location>
        <begin position="209"/>
        <end position="242"/>
    </location>
</feature>
<feature type="transmembrane region" description="Helical" evidence="2">
    <location>
        <begin position="243"/>
        <end position="263"/>
    </location>
</feature>
<feature type="topological domain" description="Extracellular" evidence="2">
    <location>
        <begin position="264"/>
        <end position="275"/>
    </location>
</feature>
<feature type="transmembrane region" description="Helical" evidence="2">
    <location>
        <begin position="276"/>
        <end position="296"/>
    </location>
</feature>
<feature type="topological domain" description="Cytoplasmic" evidence="2">
    <location>
        <begin position="297"/>
        <end position="313"/>
    </location>
</feature>
<feature type="transmembrane region" description="Helical" evidence="2">
    <location>
        <begin position="314"/>
        <end position="334"/>
    </location>
</feature>
<feature type="topological domain" description="Extracellular" evidence="2">
    <location>
        <begin position="335"/>
        <end position="349"/>
    </location>
</feature>
<feature type="transmembrane region" description="Helical" evidence="2">
    <location>
        <begin position="350"/>
        <end position="370"/>
    </location>
</feature>
<feature type="topological domain" description="Cytoplasmic" evidence="2">
    <location>
        <begin position="371"/>
        <end position="386"/>
    </location>
</feature>
<feature type="transmembrane region" description="Helical" evidence="2">
    <location>
        <begin position="387"/>
        <end position="407"/>
    </location>
</feature>
<feature type="topological domain" description="Extracellular" evidence="2">
    <location>
        <begin position="408"/>
        <end position="417"/>
    </location>
</feature>
<feature type="transmembrane region" description="Helical" evidence="2">
    <location>
        <begin position="418"/>
        <end position="438"/>
    </location>
</feature>
<feature type="topological domain" description="Cytoplasmic" evidence="2">
    <location>
        <begin position="439"/>
        <end position="457"/>
    </location>
</feature>
<proteinExistence type="inferred from homology"/>
<gene>
    <name type="primary">mdtK</name>
    <name type="synonym">norM</name>
    <name type="ordered locus">SPA1428</name>
</gene>
<protein>
    <recommendedName>
        <fullName>Multidrug resistance protein MdtK</fullName>
    </recommendedName>
    <alternativeName>
        <fullName>Multidrug-efflux transporter</fullName>
    </alternativeName>
</protein>
<keyword id="KW-0050">Antiport</keyword>
<keyword id="KW-0997">Cell inner membrane</keyword>
<keyword id="KW-1003">Cell membrane</keyword>
<keyword id="KW-0406">Ion transport</keyword>
<keyword id="KW-0472">Membrane</keyword>
<keyword id="KW-0915">Sodium</keyword>
<keyword id="KW-0739">Sodium transport</keyword>
<keyword id="KW-0812">Transmembrane</keyword>
<keyword id="KW-1133">Transmembrane helix</keyword>
<keyword id="KW-0813">Transport</keyword>
<name>MDTK_SALPA</name>
<reference key="1">
    <citation type="journal article" date="2004" name="Nat. Genet.">
        <title>Comparison of genome degradation in Paratyphi A and Typhi, human-restricted serovars of Salmonella enterica that cause typhoid.</title>
        <authorList>
            <person name="McClelland M."/>
            <person name="Sanderson K.E."/>
            <person name="Clifton S.W."/>
            <person name="Latreille P."/>
            <person name="Porwollik S."/>
            <person name="Sabo A."/>
            <person name="Meyer R."/>
            <person name="Bieri T."/>
            <person name="Ozersky P."/>
            <person name="McLellan M."/>
            <person name="Harkins C.R."/>
            <person name="Wang C."/>
            <person name="Nguyen C."/>
            <person name="Berghoff A."/>
            <person name="Elliott G."/>
            <person name="Kohlberg S."/>
            <person name="Strong C."/>
            <person name="Du F."/>
            <person name="Carter J."/>
            <person name="Kremizki C."/>
            <person name="Layman D."/>
            <person name="Leonard S."/>
            <person name="Sun H."/>
            <person name="Fulton L."/>
            <person name="Nash W."/>
            <person name="Miner T."/>
            <person name="Minx P."/>
            <person name="Delehaunty K."/>
            <person name="Fronick C."/>
            <person name="Magrini V."/>
            <person name="Nhan M."/>
            <person name="Warren W."/>
            <person name="Florea L."/>
            <person name="Spieth J."/>
            <person name="Wilson R.K."/>
        </authorList>
    </citation>
    <scope>NUCLEOTIDE SEQUENCE [LARGE SCALE GENOMIC DNA]</scope>
    <source>
        <strain>ATCC 9150 / SARB42</strain>
    </source>
</reference>
<accession>Q5PH16</accession>
<evidence type="ECO:0000250" key="1"/>
<evidence type="ECO:0000255" key="2"/>
<evidence type="ECO:0000305" key="3"/>
<organism>
    <name type="scientific">Salmonella paratyphi A (strain ATCC 9150 / SARB42)</name>
    <dbReference type="NCBI Taxonomy" id="295319"/>
    <lineage>
        <taxon>Bacteria</taxon>
        <taxon>Pseudomonadati</taxon>
        <taxon>Pseudomonadota</taxon>
        <taxon>Gammaproteobacteria</taxon>
        <taxon>Enterobacterales</taxon>
        <taxon>Enterobacteriaceae</taxon>
        <taxon>Salmonella</taxon>
    </lineage>
</organism>
<comment type="function">
    <text evidence="1">Multidrug efflux pump that functions probably as a Na(+)/drug antiporter.</text>
</comment>
<comment type="subcellular location">
    <subcellularLocation>
        <location evidence="1">Cell inner membrane</location>
        <topology evidence="1">Multi-pass membrane protein</topology>
    </subcellularLocation>
</comment>
<comment type="similarity">
    <text evidence="3">Belongs to the multi antimicrobial extrusion (MATE) (TC 2.A.66.1) family. MdtK subfamily.</text>
</comment>
<dbReference type="EMBL" id="CP000026">
    <property type="protein sequence ID" value="AAV77369.1"/>
    <property type="molecule type" value="Genomic_DNA"/>
</dbReference>
<dbReference type="RefSeq" id="WP_001175075.1">
    <property type="nucleotide sequence ID" value="NC_006511.1"/>
</dbReference>
<dbReference type="SMR" id="Q5PH16"/>
<dbReference type="KEGG" id="spt:SPA1428"/>
<dbReference type="HOGENOM" id="CLU_012893_6_0_6"/>
<dbReference type="Proteomes" id="UP000008185">
    <property type="component" value="Chromosome"/>
</dbReference>
<dbReference type="GO" id="GO:0005886">
    <property type="term" value="C:plasma membrane"/>
    <property type="evidence" value="ECO:0007669"/>
    <property type="project" value="UniProtKB-SubCell"/>
</dbReference>
<dbReference type="GO" id="GO:0015297">
    <property type="term" value="F:antiporter activity"/>
    <property type="evidence" value="ECO:0007669"/>
    <property type="project" value="UniProtKB-UniRule"/>
</dbReference>
<dbReference type="GO" id="GO:0042910">
    <property type="term" value="F:xenobiotic transmembrane transporter activity"/>
    <property type="evidence" value="ECO:0007669"/>
    <property type="project" value="UniProtKB-UniRule"/>
</dbReference>
<dbReference type="GO" id="GO:0006814">
    <property type="term" value="P:sodium ion transport"/>
    <property type="evidence" value="ECO:0007669"/>
    <property type="project" value="UniProtKB-UniRule"/>
</dbReference>
<dbReference type="GO" id="GO:0006855">
    <property type="term" value="P:xenobiotic transmembrane transport"/>
    <property type="evidence" value="ECO:0007669"/>
    <property type="project" value="UniProtKB-UniRule"/>
</dbReference>
<dbReference type="CDD" id="cd13131">
    <property type="entry name" value="MATE_NorM_like"/>
    <property type="match status" value="1"/>
</dbReference>
<dbReference type="HAMAP" id="MF_00400">
    <property type="entry name" value="MdtK"/>
    <property type="match status" value="1"/>
</dbReference>
<dbReference type="InterPro" id="IPR002528">
    <property type="entry name" value="MATE_fam"/>
</dbReference>
<dbReference type="InterPro" id="IPR050222">
    <property type="entry name" value="MATE_MdtK"/>
</dbReference>
<dbReference type="InterPro" id="IPR048279">
    <property type="entry name" value="MdtK-like"/>
</dbReference>
<dbReference type="InterPro" id="IPR022913">
    <property type="entry name" value="Multidrug-R_MdtK"/>
</dbReference>
<dbReference type="NCBIfam" id="TIGR00797">
    <property type="entry name" value="matE"/>
    <property type="match status" value="1"/>
</dbReference>
<dbReference type="PANTHER" id="PTHR43298:SF2">
    <property type="entry name" value="FMN_FAD EXPORTER YEEO-RELATED"/>
    <property type="match status" value="1"/>
</dbReference>
<dbReference type="PANTHER" id="PTHR43298">
    <property type="entry name" value="MULTIDRUG RESISTANCE PROTEIN NORM-RELATED"/>
    <property type="match status" value="1"/>
</dbReference>
<dbReference type="Pfam" id="PF01554">
    <property type="entry name" value="MatE"/>
    <property type="match status" value="2"/>
</dbReference>
<dbReference type="PIRSF" id="PIRSF006603">
    <property type="entry name" value="DinF"/>
    <property type="match status" value="1"/>
</dbReference>